<gene>
    <name type="primary">YMF16</name>
    <name type="synonym">MTT2</name>
    <name type="ordered locus">AtMg00570</name>
</gene>
<accession>P93312</accession>
<accession>A0A2P2CLG5</accession>
<accession>A7KNJ1</accession>
<accession>Q36322</accession>
<sequence>MNYLYISYEFNFALETILGEVRIRSVWILIGLGLTWFTCYWFSEELIFLLALPFLTLPFDSYFVCTQLTEAFSTFVATSSIACSYFVFPLISYQIWCFLIPSCYGEQRTKYNRFFYLSGSCFFLFLFLTFSWVVPNVWHFLYFVGATSTNSLMIKLQPKIYDYIMLTVRILFISSVCSQVPVIVICLLELRGLSLETFTNNRRFLMVFSLFTAALFTPPDIWCQIVACFLISLIIELAIFVALIVQVREEGWTSGMRESGSIEKKNKSSPPPRTWQSNYQ</sequence>
<comment type="subcellular location">
    <subcellularLocation>
        <location evidence="6">Mitochondrion membrane</location>
        <topology evidence="6">Multi-pass membrane protein</topology>
    </subcellularLocation>
</comment>
<comment type="RNA editing">
    <location>
        <position position="14" evidence="3 4 5"/>
    </location>
    <location>
        <position position="27" evidence="5"/>
    </location>
    <location>
        <position position="43" evidence="3 4 5"/>
    </location>
    <location>
        <position position="48" evidence="3 4 5"/>
    </location>
    <location>
        <position position="49" evidence="3 4 5"/>
    </location>
    <location>
        <position position="52" evidence="3 4 5"/>
    </location>
    <location>
        <position position="61" evidence="3 4"/>
    </location>
    <location>
        <position position="115" evidence="3 4 5"/>
    </location>
    <location>
        <position position="116" evidence="3 4 5"/>
    </location>
    <location>
        <position position="120" evidence="3 4 5"/>
    </location>
    <location>
        <position position="121" evidence="3 4 5"/>
    </location>
    <location>
        <position position="130" evidence="3 4 5"/>
    </location>
    <location>
        <position position="131" evidence="3 4 5"/>
    </location>
    <location>
        <position position="132" evidence="3 4 5"/>
    </location>
    <location>
        <position position="141" evidence="3 4 5"/>
    </location>
    <location>
        <position position="163" evidence="3 4 5"/>
    </location>
    <location>
        <position position="171" evidence="5"/>
    </location>
    <location>
        <position position="174" evidence="3 4 5"/>
    </location>
    <location>
        <position position="188" evidence="3 4 5"/>
    </location>
    <location>
        <position position="190" evidence="5"/>
    </location>
    <location>
        <position position="209" evidence="3 4 5"/>
    </location>
    <location>
        <position position="211" evidence="5"/>
    </location>
    <location>
        <position position="216" evidence="3 4 5"/>
    </location>
    <location>
        <position position="228" evidence="3 4 5"/>
    </location>
    <location>
        <position position="243" evidence="3 4 5"/>
    </location>
</comment>
<comment type="miscellaneous">
    <text>A stretch of 270 kb of the mitochondrial genome is duplicated within the centromere of chromosome 2 resulting in the duplication of the gene. The expression of the duplicated gene (At2g07716) is not demonstrated. It is also probably not RNA edited and therefore differs in all the positions known to be edited.</text>
</comment>
<comment type="similarity">
    <text evidence="6">Belongs to the TatC family.</text>
</comment>
<comment type="sequence caution" evidence="6">
    <conflict type="frameshift">
        <sequence resource="EMBL" id="AC007729"/>
    </conflict>
</comment>
<comment type="sequence caution" evidence="6">
    <conflict type="frameshift">
        <sequence resource="EMBL-CDS" id="CAA51193"/>
    </conflict>
</comment>
<comment type="sequence caution" evidence="6">
    <conflict type="erroneous initiation">
        <sequence resource="EMBL-CDS" id="DAB41510"/>
    </conflict>
    <text>Truncated N-terminus.</text>
</comment>
<proteinExistence type="evidence at transcript level"/>
<geneLocation type="mitochondrion"/>
<reference key="1">
    <citation type="journal article" date="1994" name="Mol. Gen. Genet.">
        <title>RNA editing of a conserved reading frame in plant mitochondria increases its similarity to two overlapping reading frames in Escherichia coli.</title>
        <authorList>
            <person name="Suenkel S."/>
            <person name="Brennicke A."/>
            <person name="Knoop V."/>
        </authorList>
    </citation>
    <scope>NUCLEOTIDE SEQUENCE [GENOMIC DNA]</scope>
    <source>
        <strain>cv. Columbia</strain>
    </source>
</reference>
<reference key="2">
    <citation type="journal article" date="1997" name="Nat. Genet.">
        <title>The mitochondrial genome of Arabidopsis thaliana contains 57 genes in 366,924 nucleotides.</title>
        <authorList>
            <person name="Unseld M."/>
            <person name="Marienfeld J.R."/>
            <person name="Brandt P."/>
            <person name="Brennicke A."/>
        </authorList>
    </citation>
    <scope>NUCLEOTIDE SEQUENCE [LARGE SCALE GENOMIC DNA]</scope>
    <source>
        <strain>cv. C24</strain>
    </source>
</reference>
<reference key="3">
    <citation type="journal article" date="1999" name="Proc. Natl. Acad. Sci. U.S.A.">
        <title>RNA editing in Arabidopsis mitochondria effects 441 C to U changes in ORFs.</title>
        <authorList>
            <person name="Giege P."/>
            <person name="Brennicke A."/>
        </authorList>
    </citation>
    <scope>NUCLEOTIDE SEQUENCE [GENOMIC DNA]</scope>
    <scope>RNA EDITING</scope>
</reference>
<reference key="4">
    <citation type="journal article" date="2018" name="Plant Cell">
        <title>Correction of persistent errors in Arabidopsis reference mitochondrial genomes.</title>
        <authorList>
            <person name="Sloan D.B."/>
            <person name="Wu Z."/>
            <person name="Sharbrough J."/>
        </authorList>
    </citation>
    <scope>NUCLEOTIDE SEQUENCE [LARGE SCALE GENOMIC DNA]</scope>
    <scope>RNA EDITING</scope>
    <source>
        <strain>cv. Columbia</strain>
    </source>
</reference>
<reference key="5">
    <citation type="journal article" date="1999" name="Nature">
        <title>Sequence and analysis of chromosome 2 of the plant Arabidopsis thaliana.</title>
        <authorList>
            <person name="Lin X."/>
            <person name="Kaul S."/>
            <person name="Rounsley S.D."/>
            <person name="Shea T.P."/>
            <person name="Benito M.-I."/>
            <person name="Town C.D."/>
            <person name="Fujii C.Y."/>
            <person name="Mason T.M."/>
            <person name="Bowman C.L."/>
            <person name="Barnstead M.E."/>
            <person name="Feldblyum T.V."/>
            <person name="Buell C.R."/>
            <person name="Ketchum K.A."/>
            <person name="Lee J.J."/>
            <person name="Ronning C.M."/>
            <person name="Koo H.L."/>
            <person name="Moffat K.S."/>
            <person name="Cronin L.A."/>
            <person name="Shen M."/>
            <person name="Pai G."/>
            <person name="Van Aken S."/>
            <person name="Umayam L."/>
            <person name="Tallon L.J."/>
            <person name="Gill J.E."/>
            <person name="Adams M.D."/>
            <person name="Carrera A.J."/>
            <person name="Creasy T.H."/>
            <person name="Goodman H.M."/>
            <person name="Somerville C.R."/>
            <person name="Copenhaver G.P."/>
            <person name="Preuss D."/>
            <person name="Nierman W.C."/>
            <person name="White O."/>
            <person name="Eisen J.A."/>
            <person name="Salzberg S.L."/>
            <person name="Fraser C.M."/>
            <person name="Venter J.C."/>
        </authorList>
    </citation>
    <scope>NUCLEOTIDE SEQUENCE [LARGE SCALE GENOMIC DNA] (AT2G07716)</scope>
    <source>
        <strain>cv. Columbia</strain>
    </source>
</reference>
<reference key="6">
    <citation type="journal article" date="2008" name="Genetics">
        <title>Genetic architecture of mitochondrial editing in Arabidopsis thaliana.</title>
        <authorList>
            <person name="Bentolila S."/>
            <person name="Elliott L.E."/>
            <person name="Hanson M.R."/>
        </authorList>
    </citation>
    <scope>NUCLEOTIDE SEQUENCE [MRNA] OF 11-265</scope>
    <scope>RNA EDITING</scope>
    <source>
        <strain>cv. Columbia</strain>
        <strain>cv. Landsberg erecta</strain>
        <tissue>Rosette leaf</tissue>
    </source>
</reference>
<keyword id="KW-0472">Membrane</keyword>
<keyword id="KW-0496">Mitochondrion</keyword>
<keyword id="KW-1185">Reference proteome</keyword>
<keyword id="KW-0691">RNA editing</keyword>
<keyword id="KW-0812">Transmembrane</keyword>
<keyword id="KW-1133">Transmembrane helix</keyword>
<evidence type="ECO:0000255" key="1"/>
<evidence type="ECO:0000256" key="2">
    <source>
        <dbReference type="SAM" id="MobiDB-lite"/>
    </source>
</evidence>
<evidence type="ECO:0000269" key="3">
    <source>
    </source>
</evidence>
<evidence type="ECO:0000269" key="4">
    <source>
    </source>
</evidence>
<evidence type="ECO:0000269" key="5">
    <source>
    </source>
</evidence>
<evidence type="ECO:0000305" key="6"/>
<name>YMF16_ARATH</name>
<dbReference type="EMBL" id="X72616">
    <property type="protein sequence ID" value="CAA51193.1"/>
    <property type="status" value="ALT_FRAME"/>
    <property type="molecule type" value="Genomic_DNA"/>
</dbReference>
<dbReference type="EMBL" id="Y08501">
    <property type="protein sequence ID" value="CAA69741.3"/>
    <property type="status" value="ALT_SEQ"/>
    <property type="molecule type" value="Genomic_DNA"/>
</dbReference>
<dbReference type="EMBL" id="BK010421">
    <property type="protein sequence ID" value="DAB41510.2"/>
    <property type="status" value="ALT_INIT"/>
    <property type="molecule type" value="Genomic_DNA"/>
</dbReference>
<dbReference type="EMBL" id="AC007729">
    <property type="status" value="NOT_ANNOTATED_CDS"/>
    <property type="molecule type" value="Genomic_DNA"/>
</dbReference>
<dbReference type="EMBL" id="EF488934">
    <property type="protein sequence ID" value="ABS50646.1"/>
    <property type="molecule type" value="mRNA"/>
</dbReference>
<dbReference type="EMBL" id="EF488935">
    <property type="protein sequence ID" value="ABS50647.1"/>
    <property type="molecule type" value="mRNA"/>
</dbReference>
<dbReference type="PIR" id="S46330">
    <property type="entry name" value="S46330"/>
</dbReference>
<dbReference type="RefSeq" id="NP_085517.1">
    <property type="nucleotide sequence ID" value="NC_001284.2"/>
</dbReference>
<dbReference type="SMR" id="P93312"/>
<dbReference type="STRING" id="3702.A0A2P2CLG5"/>
<dbReference type="PaxDb" id="3702-ATMG00570.1"/>
<dbReference type="Araport" id="ATMG00570"/>
<dbReference type="TAIR" id="ATMG00570"/>
<dbReference type="eggNOG" id="ENOG502RS7A">
    <property type="taxonomic scope" value="Eukaryota"/>
</dbReference>
<dbReference type="HOGENOM" id="CLU_084965_0_0_1"/>
<dbReference type="InParanoid" id="P93312"/>
<dbReference type="PRO" id="PR:P93312"/>
<dbReference type="Proteomes" id="UP000006548">
    <property type="component" value="Mitochondrion MT"/>
</dbReference>
<dbReference type="ExpressionAtlas" id="P93312">
    <property type="expression patterns" value="baseline and differential"/>
</dbReference>
<dbReference type="GO" id="GO:0031966">
    <property type="term" value="C:mitochondrial membrane"/>
    <property type="evidence" value="ECO:0007669"/>
    <property type="project" value="UniProtKB-SubCell"/>
</dbReference>
<dbReference type="GO" id="GO:0033281">
    <property type="term" value="C:TAT protein transport complex"/>
    <property type="evidence" value="ECO:0000318"/>
    <property type="project" value="GO_Central"/>
</dbReference>
<dbReference type="GO" id="GO:0009977">
    <property type="term" value="F:proton motive force dependent protein transmembrane transporter activity"/>
    <property type="evidence" value="ECO:0000318"/>
    <property type="project" value="GO_Central"/>
</dbReference>
<dbReference type="GO" id="GO:0065002">
    <property type="term" value="P:intracellular protein transmembrane transport"/>
    <property type="evidence" value="ECO:0000318"/>
    <property type="project" value="GO_Central"/>
</dbReference>
<dbReference type="GO" id="GO:0043953">
    <property type="term" value="P:protein transport by the Tat complex"/>
    <property type="evidence" value="ECO:0000318"/>
    <property type="project" value="GO_Central"/>
</dbReference>
<dbReference type="InterPro" id="IPR002033">
    <property type="entry name" value="TatC"/>
</dbReference>
<dbReference type="NCBIfam" id="TIGR00945">
    <property type="entry name" value="tatC"/>
    <property type="match status" value="1"/>
</dbReference>
<dbReference type="PANTHER" id="PTHR30371">
    <property type="entry name" value="SEC-INDEPENDENT PROTEIN TRANSLOCASE PROTEIN TATC"/>
    <property type="match status" value="1"/>
</dbReference>
<dbReference type="PANTHER" id="PTHR30371:SF0">
    <property type="entry name" value="SEC-INDEPENDENT PROTEIN TRANSLOCASE PROTEIN TATC, CHLOROPLASTIC-RELATED"/>
    <property type="match status" value="1"/>
</dbReference>
<dbReference type="Pfam" id="PF00902">
    <property type="entry name" value="TatC"/>
    <property type="match status" value="1"/>
</dbReference>
<dbReference type="PRINTS" id="PR01840">
    <property type="entry name" value="TATCFAMILY"/>
</dbReference>
<organism>
    <name type="scientific">Arabidopsis thaliana</name>
    <name type="common">Mouse-ear cress</name>
    <dbReference type="NCBI Taxonomy" id="3702"/>
    <lineage>
        <taxon>Eukaryota</taxon>
        <taxon>Viridiplantae</taxon>
        <taxon>Streptophyta</taxon>
        <taxon>Embryophyta</taxon>
        <taxon>Tracheophyta</taxon>
        <taxon>Spermatophyta</taxon>
        <taxon>Magnoliopsida</taxon>
        <taxon>eudicotyledons</taxon>
        <taxon>Gunneridae</taxon>
        <taxon>Pentapetalae</taxon>
        <taxon>rosids</taxon>
        <taxon>malvids</taxon>
        <taxon>Brassicales</taxon>
        <taxon>Brassicaceae</taxon>
        <taxon>Camelineae</taxon>
        <taxon>Arabidopsis</taxon>
    </lineage>
</organism>
<protein>
    <recommendedName>
        <fullName>Uncharacterized tatC-like protein ymf16</fullName>
    </recommendedName>
    <alternativeName>
        <fullName>ORFX</fullName>
    </alternativeName>
</protein>
<feature type="chain" id="PRO_0000098104" description="Uncharacterized tatC-like protein ymf16">
    <location>
        <begin position="1"/>
        <end position="280"/>
    </location>
</feature>
<feature type="transmembrane region" description="Helical" evidence="1">
    <location>
        <begin position="46"/>
        <end position="66"/>
    </location>
</feature>
<feature type="transmembrane region" description="Helical" evidence="1">
    <location>
        <begin position="81"/>
        <end position="101"/>
    </location>
</feature>
<feature type="transmembrane region" description="Helical" evidence="1">
    <location>
        <begin position="114"/>
        <end position="134"/>
    </location>
</feature>
<feature type="transmembrane region" description="Helical" evidence="1">
    <location>
        <begin position="137"/>
        <end position="157"/>
    </location>
</feature>
<feature type="transmembrane region" description="Helical" evidence="1">
    <location>
        <begin position="170"/>
        <end position="190"/>
    </location>
</feature>
<feature type="transmembrane region" description="Helical" evidence="1">
    <location>
        <begin position="225"/>
        <end position="245"/>
    </location>
</feature>
<feature type="region of interest" description="Disordered" evidence="2">
    <location>
        <begin position="258"/>
        <end position="280"/>
    </location>
</feature>
<feature type="sequence conflict" description="In Ref. 4; DAB41510." evidence="6" ref="4">
    <original>M</original>
    <variation>L</variation>
    <location>
        <position position="1"/>
    </location>
</feature>
<feature type="sequence conflict" description="In Ref. 1; CAA51193." evidence="6" ref="1">
    <original>S</original>
    <variation>R</variation>
    <location>
        <position position="269"/>
    </location>
</feature>